<proteinExistence type="inferred from homology"/>
<reference key="1">
    <citation type="journal article" date="2004" name="Nature">
        <title>Genome evolution in yeasts.</title>
        <authorList>
            <person name="Dujon B."/>
            <person name="Sherman D."/>
            <person name="Fischer G."/>
            <person name="Durrens P."/>
            <person name="Casaregola S."/>
            <person name="Lafontaine I."/>
            <person name="de Montigny J."/>
            <person name="Marck C."/>
            <person name="Neuveglise C."/>
            <person name="Talla E."/>
            <person name="Goffard N."/>
            <person name="Frangeul L."/>
            <person name="Aigle M."/>
            <person name="Anthouard V."/>
            <person name="Babour A."/>
            <person name="Barbe V."/>
            <person name="Barnay S."/>
            <person name="Blanchin S."/>
            <person name="Beckerich J.-M."/>
            <person name="Beyne E."/>
            <person name="Bleykasten C."/>
            <person name="Boisrame A."/>
            <person name="Boyer J."/>
            <person name="Cattolico L."/>
            <person name="Confanioleri F."/>
            <person name="de Daruvar A."/>
            <person name="Despons L."/>
            <person name="Fabre E."/>
            <person name="Fairhead C."/>
            <person name="Ferry-Dumazet H."/>
            <person name="Groppi A."/>
            <person name="Hantraye F."/>
            <person name="Hennequin C."/>
            <person name="Jauniaux N."/>
            <person name="Joyet P."/>
            <person name="Kachouri R."/>
            <person name="Kerrest A."/>
            <person name="Koszul R."/>
            <person name="Lemaire M."/>
            <person name="Lesur I."/>
            <person name="Ma L."/>
            <person name="Muller H."/>
            <person name="Nicaud J.-M."/>
            <person name="Nikolski M."/>
            <person name="Oztas S."/>
            <person name="Ozier-Kalogeropoulos O."/>
            <person name="Pellenz S."/>
            <person name="Potier S."/>
            <person name="Richard G.-F."/>
            <person name="Straub M.-L."/>
            <person name="Suleau A."/>
            <person name="Swennen D."/>
            <person name="Tekaia F."/>
            <person name="Wesolowski-Louvel M."/>
            <person name="Westhof E."/>
            <person name="Wirth B."/>
            <person name="Zeniou-Meyer M."/>
            <person name="Zivanovic Y."/>
            <person name="Bolotin-Fukuhara M."/>
            <person name="Thierry A."/>
            <person name="Bouchier C."/>
            <person name="Caudron B."/>
            <person name="Scarpelli C."/>
            <person name="Gaillardin C."/>
            <person name="Weissenbach J."/>
            <person name="Wincker P."/>
            <person name="Souciet J.-L."/>
        </authorList>
    </citation>
    <scope>NUCLEOTIDE SEQUENCE [LARGE SCALE GENOMIC DNA]</scope>
    <source>
        <strain>CLIB 122 / E 150</strain>
    </source>
</reference>
<protein>
    <recommendedName>
        <fullName evidence="1">tRNA (guanine-N(7)-)-methyltransferase</fullName>
        <ecNumber evidence="1">2.1.1.33</ecNumber>
    </recommendedName>
    <alternativeName>
        <fullName evidence="1">Transfer RNA methyltransferase 8</fullName>
    </alternativeName>
    <alternativeName>
        <fullName evidence="1">tRNA (guanine(46)-N(7))-methyltransferase</fullName>
    </alternativeName>
    <alternativeName>
        <fullName evidence="1">tRNA(m7G46)-methyltransferase</fullName>
    </alternativeName>
</protein>
<dbReference type="EC" id="2.1.1.33" evidence="1"/>
<dbReference type="EMBL" id="CR382128">
    <property type="protein sequence ID" value="CAG83353.1"/>
    <property type="molecule type" value="Genomic_DNA"/>
</dbReference>
<dbReference type="RefSeq" id="XP_501100.1">
    <property type="nucleotide sequence ID" value="XM_501100.1"/>
</dbReference>
<dbReference type="SMR" id="Q6CE12"/>
<dbReference type="FunCoup" id="Q6CE12">
    <property type="interactions" value="550"/>
</dbReference>
<dbReference type="STRING" id="284591.Q6CE12"/>
<dbReference type="EnsemblFungi" id="CAG83353">
    <property type="protein sequence ID" value="CAG83353"/>
    <property type="gene ID" value="YALI0_B19558g"/>
</dbReference>
<dbReference type="KEGG" id="yli:2907246"/>
<dbReference type="VEuPathDB" id="FungiDB:YALI0_B19558g"/>
<dbReference type="HOGENOM" id="CLU_050910_3_1_1"/>
<dbReference type="InParanoid" id="Q6CE12"/>
<dbReference type="OMA" id="LPNYFAK"/>
<dbReference type="OrthoDB" id="114480at4891"/>
<dbReference type="UniPathway" id="UPA00989"/>
<dbReference type="Proteomes" id="UP000001300">
    <property type="component" value="Chromosome B"/>
</dbReference>
<dbReference type="GO" id="GO:0005634">
    <property type="term" value="C:nucleus"/>
    <property type="evidence" value="ECO:0007669"/>
    <property type="project" value="UniProtKB-SubCell"/>
</dbReference>
<dbReference type="GO" id="GO:0043527">
    <property type="term" value="C:tRNA methyltransferase complex"/>
    <property type="evidence" value="ECO:0000318"/>
    <property type="project" value="GO_Central"/>
</dbReference>
<dbReference type="GO" id="GO:0008176">
    <property type="term" value="F:tRNA (guanine(46)-N7)-methyltransferase activity"/>
    <property type="evidence" value="ECO:0000318"/>
    <property type="project" value="GO_Central"/>
</dbReference>
<dbReference type="GO" id="GO:0000049">
    <property type="term" value="F:tRNA binding"/>
    <property type="evidence" value="ECO:0007669"/>
    <property type="project" value="UniProtKB-UniRule"/>
</dbReference>
<dbReference type="GO" id="GO:0036265">
    <property type="term" value="P:RNA (guanine-N7)-methylation"/>
    <property type="evidence" value="ECO:0000318"/>
    <property type="project" value="GO_Central"/>
</dbReference>
<dbReference type="GO" id="GO:0030488">
    <property type="term" value="P:tRNA methylation"/>
    <property type="evidence" value="ECO:0000318"/>
    <property type="project" value="GO_Central"/>
</dbReference>
<dbReference type="CDD" id="cd02440">
    <property type="entry name" value="AdoMet_MTases"/>
    <property type="match status" value="1"/>
</dbReference>
<dbReference type="FunFam" id="3.40.50.150:FF:000060">
    <property type="entry name" value="tRNA (guanine-N(7)-)-methyltransferase"/>
    <property type="match status" value="1"/>
</dbReference>
<dbReference type="Gene3D" id="3.40.50.150">
    <property type="entry name" value="Vaccinia Virus protein VP39"/>
    <property type="match status" value="1"/>
</dbReference>
<dbReference type="HAMAP" id="MF_03055">
    <property type="entry name" value="tRNA_methyltr_TrmB_euk"/>
    <property type="match status" value="1"/>
</dbReference>
<dbReference type="InterPro" id="IPR029063">
    <property type="entry name" value="SAM-dependent_MTases_sf"/>
</dbReference>
<dbReference type="InterPro" id="IPR025763">
    <property type="entry name" value="Trm8_euk"/>
</dbReference>
<dbReference type="InterPro" id="IPR003358">
    <property type="entry name" value="tRNA_(Gua-N-7)_MeTrfase_Trmb"/>
</dbReference>
<dbReference type="NCBIfam" id="TIGR00091">
    <property type="entry name" value="tRNA (guanosine(46)-N7)-methyltransferase TrmB"/>
    <property type="match status" value="1"/>
</dbReference>
<dbReference type="PANTHER" id="PTHR23417">
    <property type="entry name" value="3-DEOXY-D-MANNO-OCTULOSONIC-ACID TRANSFERASE/TRNA GUANINE-N 7 - -METHYLTRANSFERASE"/>
    <property type="match status" value="1"/>
</dbReference>
<dbReference type="PANTHER" id="PTHR23417:SF16">
    <property type="entry name" value="TRNA (GUANINE-N(7)-)-METHYLTRANSFERASE"/>
    <property type="match status" value="1"/>
</dbReference>
<dbReference type="Pfam" id="PF02390">
    <property type="entry name" value="Methyltransf_4"/>
    <property type="match status" value="1"/>
</dbReference>
<dbReference type="SUPFAM" id="SSF53335">
    <property type="entry name" value="S-adenosyl-L-methionine-dependent methyltransferases"/>
    <property type="match status" value="1"/>
</dbReference>
<dbReference type="PROSITE" id="PS51625">
    <property type="entry name" value="SAM_MT_TRMB"/>
    <property type="match status" value="1"/>
</dbReference>
<comment type="function">
    <text evidence="1">Catalyzes the formation of N(7)-methylguanine at position 46 (m7G46) in tRNA.</text>
</comment>
<comment type="catalytic activity">
    <reaction evidence="1">
        <text>guanosine(46) in tRNA + S-adenosyl-L-methionine = N(7)-methylguanosine(46) in tRNA + S-adenosyl-L-homocysteine</text>
        <dbReference type="Rhea" id="RHEA:42708"/>
        <dbReference type="Rhea" id="RHEA-COMP:10188"/>
        <dbReference type="Rhea" id="RHEA-COMP:10189"/>
        <dbReference type="ChEBI" id="CHEBI:57856"/>
        <dbReference type="ChEBI" id="CHEBI:59789"/>
        <dbReference type="ChEBI" id="CHEBI:74269"/>
        <dbReference type="ChEBI" id="CHEBI:74480"/>
        <dbReference type="EC" id="2.1.1.33"/>
    </reaction>
</comment>
<comment type="pathway">
    <text evidence="1">tRNA modification; N(7)-methylguanine-tRNA biosynthesis.</text>
</comment>
<comment type="subunit">
    <text evidence="1">Forms a complex with TRM82.</text>
</comment>
<comment type="subcellular location">
    <subcellularLocation>
        <location evidence="1">Nucleus</location>
    </subcellularLocation>
</comment>
<comment type="similarity">
    <text evidence="1">Belongs to the class I-like SAM-binding methyltransferase superfamily. TrmB family.</text>
</comment>
<feature type="chain" id="PRO_0000370606" description="tRNA (guanine-N(7)-)-methyltransferase">
    <location>
        <begin position="1"/>
        <end position="292"/>
    </location>
</feature>
<feature type="region of interest" description="Disordered" evidence="2">
    <location>
        <begin position="1"/>
        <end position="54"/>
    </location>
</feature>
<feature type="compositionally biased region" description="Basic and acidic residues" evidence="2">
    <location>
        <begin position="19"/>
        <end position="42"/>
    </location>
</feature>
<feature type="active site" evidence="1">
    <location>
        <position position="191"/>
    </location>
</feature>
<feature type="binding site" evidence="1">
    <location>
        <position position="110"/>
    </location>
    <ligand>
        <name>S-adenosyl-L-methionine</name>
        <dbReference type="ChEBI" id="CHEBI:59789"/>
    </ligand>
</feature>
<feature type="binding site" evidence="1">
    <location>
        <begin position="133"/>
        <end position="134"/>
    </location>
    <ligand>
        <name>S-adenosyl-L-methionine</name>
        <dbReference type="ChEBI" id="CHEBI:59789"/>
    </ligand>
</feature>
<feature type="binding site" evidence="1">
    <location>
        <begin position="168"/>
        <end position="169"/>
    </location>
    <ligand>
        <name>S-adenosyl-L-methionine</name>
        <dbReference type="ChEBI" id="CHEBI:59789"/>
    </ligand>
</feature>
<feature type="binding site" evidence="1">
    <location>
        <position position="188"/>
    </location>
    <ligand>
        <name>S-adenosyl-L-methionine</name>
        <dbReference type="ChEBI" id="CHEBI:59789"/>
    </ligand>
</feature>
<feature type="binding site" evidence="1">
    <location>
        <begin position="266"/>
        <end position="268"/>
    </location>
    <ligand>
        <name>S-adenosyl-L-methionine</name>
        <dbReference type="ChEBI" id="CHEBI:59789"/>
    </ligand>
</feature>
<gene>
    <name evidence="1" type="primary">TRM8</name>
    <name type="ordered locus">YALI0B19558g</name>
</gene>
<accession>Q6CE12</accession>
<sequence>MLKRDQSEMDIEAETANMGKEEKESFVHKRQKYRQEQEEKRLAAKKGVSFEQPEDGEIKLPKKRYYRQRAHSNPFSDHQLEYPESPADMDWDVLYPNRKEGQKVEVADIGCGFGGLLVALSPQLPNQLILGMEIRVQVTNYVEDRIVALRHQNKETDGYQNISVLRGNAMKFLPNFFEKGQLSKIFFCFPDPHFKQRKHKARIVTTTLCSEYAYVVRPGGIVYTITDVKDLHEWMVKHLAAHPLFERLTKEEEDADPCVATMLVETEEGKKVARNEGDKFVACFRRKENPEW</sequence>
<name>TRMB_YARLI</name>
<keyword id="KW-0489">Methyltransferase</keyword>
<keyword id="KW-0539">Nucleus</keyword>
<keyword id="KW-1185">Reference proteome</keyword>
<keyword id="KW-0694">RNA-binding</keyword>
<keyword id="KW-0949">S-adenosyl-L-methionine</keyword>
<keyword id="KW-0808">Transferase</keyword>
<keyword id="KW-0819">tRNA processing</keyword>
<keyword id="KW-0820">tRNA-binding</keyword>
<organism>
    <name type="scientific">Yarrowia lipolytica (strain CLIB 122 / E 150)</name>
    <name type="common">Yeast</name>
    <name type="synonym">Candida lipolytica</name>
    <dbReference type="NCBI Taxonomy" id="284591"/>
    <lineage>
        <taxon>Eukaryota</taxon>
        <taxon>Fungi</taxon>
        <taxon>Dikarya</taxon>
        <taxon>Ascomycota</taxon>
        <taxon>Saccharomycotina</taxon>
        <taxon>Dipodascomycetes</taxon>
        <taxon>Dipodascales</taxon>
        <taxon>Dipodascales incertae sedis</taxon>
        <taxon>Yarrowia</taxon>
    </lineage>
</organism>
<evidence type="ECO:0000255" key="1">
    <source>
        <dbReference type="HAMAP-Rule" id="MF_03055"/>
    </source>
</evidence>
<evidence type="ECO:0000256" key="2">
    <source>
        <dbReference type="SAM" id="MobiDB-lite"/>
    </source>
</evidence>